<comment type="catalytic activity">
    <reaction evidence="1">
        <text>L-glutamine + H2O = L-glutamate + NH4(+)</text>
        <dbReference type="Rhea" id="RHEA:15889"/>
        <dbReference type="ChEBI" id="CHEBI:15377"/>
        <dbReference type="ChEBI" id="CHEBI:28938"/>
        <dbReference type="ChEBI" id="CHEBI:29985"/>
        <dbReference type="ChEBI" id="CHEBI:58359"/>
        <dbReference type="EC" id="3.5.1.2"/>
    </reaction>
</comment>
<comment type="subunit">
    <text evidence="1">Homotetramer.</text>
</comment>
<comment type="similarity">
    <text evidence="1">Belongs to the glutaminase family.</text>
</comment>
<reference key="1">
    <citation type="submission" date="2006-08" db="EMBL/GenBank/DDBJ databases">
        <title>Complete sequence of Shewanella sp. MR-4.</title>
        <authorList>
            <consortium name="US DOE Joint Genome Institute"/>
            <person name="Copeland A."/>
            <person name="Lucas S."/>
            <person name="Lapidus A."/>
            <person name="Barry K."/>
            <person name="Detter J.C."/>
            <person name="Glavina del Rio T."/>
            <person name="Hammon N."/>
            <person name="Israni S."/>
            <person name="Dalin E."/>
            <person name="Tice H."/>
            <person name="Pitluck S."/>
            <person name="Kiss H."/>
            <person name="Brettin T."/>
            <person name="Bruce D."/>
            <person name="Han C."/>
            <person name="Tapia R."/>
            <person name="Gilna P."/>
            <person name="Schmutz J."/>
            <person name="Larimer F."/>
            <person name="Land M."/>
            <person name="Hauser L."/>
            <person name="Kyrpides N."/>
            <person name="Mikhailova N."/>
            <person name="Nealson K."/>
            <person name="Konstantinidis K."/>
            <person name="Klappenbach J."/>
            <person name="Tiedje J."/>
            <person name="Richardson P."/>
        </authorList>
    </citation>
    <scope>NUCLEOTIDE SEQUENCE [LARGE SCALE GENOMIC DNA]</scope>
    <source>
        <strain>MR-4</strain>
    </source>
</reference>
<name>GLSA_SHESM</name>
<feature type="chain" id="PRO_1000048361" description="Glutaminase">
    <location>
        <begin position="1"/>
        <end position="304"/>
    </location>
</feature>
<feature type="binding site" evidence="1">
    <location>
        <position position="63"/>
    </location>
    <ligand>
        <name>substrate</name>
    </ligand>
</feature>
<feature type="binding site" evidence="1">
    <location>
        <position position="114"/>
    </location>
    <ligand>
        <name>substrate</name>
    </ligand>
</feature>
<feature type="binding site" evidence="1">
    <location>
        <position position="158"/>
    </location>
    <ligand>
        <name>substrate</name>
    </ligand>
</feature>
<feature type="binding site" evidence="1">
    <location>
        <position position="165"/>
    </location>
    <ligand>
        <name>substrate</name>
    </ligand>
</feature>
<feature type="binding site" evidence="1">
    <location>
        <position position="189"/>
    </location>
    <ligand>
        <name>substrate</name>
    </ligand>
</feature>
<feature type="binding site" evidence="1">
    <location>
        <position position="240"/>
    </location>
    <ligand>
        <name>substrate</name>
    </ligand>
</feature>
<feature type="binding site" evidence="1">
    <location>
        <position position="258"/>
    </location>
    <ligand>
        <name>substrate</name>
    </ligand>
</feature>
<sequence length="304" mass="32925">MPEQALLEEVVDKVRPLLGQGKVANYIPALANVDAGKLGIAVTTIDGETIGAGDYLEPFSIQSISKVFSLTLALTLYEETEIWSRVGKEPSGHSFNSLVQVELERGKPRNPFINAGALVIADLLQSRLGAPKHRMLELVRALSQNDKVCFDKQVADSEYQHSARNAAIAYLMKSFGNFQGDVDTVLRTYFHYCALKMNCADLSRAMLYLANRGKTLDGTELISQVQTRQLNALLATSGLYDGAGEFAYRVGMPGKSGVGGGIIAVIPGELSVCVWSPELDNQGNSLAGTAMLEHLSQRLGRSIF</sequence>
<evidence type="ECO:0000255" key="1">
    <source>
        <dbReference type="HAMAP-Rule" id="MF_00313"/>
    </source>
</evidence>
<proteinExistence type="inferred from homology"/>
<protein>
    <recommendedName>
        <fullName evidence="1">Glutaminase</fullName>
        <ecNumber evidence="1">3.5.1.2</ecNumber>
    </recommendedName>
</protein>
<accession>Q0HL04</accession>
<dbReference type="EC" id="3.5.1.2" evidence="1"/>
<dbReference type="EMBL" id="CP000446">
    <property type="protein sequence ID" value="ABI38263.1"/>
    <property type="molecule type" value="Genomic_DNA"/>
</dbReference>
<dbReference type="SMR" id="Q0HL04"/>
<dbReference type="KEGG" id="she:Shewmr4_1183"/>
<dbReference type="HOGENOM" id="CLU_027932_1_1_6"/>
<dbReference type="GO" id="GO:0004359">
    <property type="term" value="F:glutaminase activity"/>
    <property type="evidence" value="ECO:0007669"/>
    <property type="project" value="UniProtKB-UniRule"/>
</dbReference>
<dbReference type="GO" id="GO:0006537">
    <property type="term" value="P:glutamate biosynthetic process"/>
    <property type="evidence" value="ECO:0007669"/>
    <property type="project" value="TreeGrafter"/>
</dbReference>
<dbReference type="GO" id="GO:0006543">
    <property type="term" value="P:glutamine catabolic process"/>
    <property type="evidence" value="ECO:0007669"/>
    <property type="project" value="TreeGrafter"/>
</dbReference>
<dbReference type="FunFam" id="3.40.710.10:FF:000005">
    <property type="entry name" value="Glutaminase"/>
    <property type="match status" value="1"/>
</dbReference>
<dbReference type="Gene3D" id="3.40.710.10">
    <property type="entry name" value="DD-peptidase/beta-lactamase superfamily"/>
    <property type="match status" value="1"/>
</dbReference>
<dbReference type="HAMAP" id="MF_00313">
    <property type="entry name" value="Glutaminase"/>
    <property type="match status" value="1"/>
</dbReference>
<dbReference type="InterPro" id="IPR012338">
    <property type="entry name" value="Beta-lactam/transpept-like"/>
</dbReference>
<dbReference type="InterPro" id="IPR015868">
    <property type="entry name" value="Glutaminase"/>
</dbReference>
<dbReference type="NCBIfam" id="TIGR03814">
    <property type="entry name" value="Gln_ase"/>
    <property type="match status" value="1"/>
</dbReference>
<dbReference type="NCBIfam" id="NF002132">
    <property type="entry name" value="PRK00971.1-1"/>
    <property type="match status" value="1"/>
</dbReference>
<dbReference type="NCBIfam" id="NF002133">
    <property type="entry name" value="PRK00971.1-2"/>
    <property type="match status" value="1"/>
</dbReference>
<dbReference type="PANTHER" id="PTHR12544">
    <property type="entry name" value="GLUTAMINASE"/>
    <property type="match status" value="1"/>
</dbReference>
<dbReference type="PANTHER" id="PTHR12544:SF29">
    <property type="entry name" value="GLUTAMINASE"/>
    <property type="match status" value="1"/>
</dbReference>
<dbReference type="Pfam" id="PF04960">
    <property type="entry name" value="Glutaminase"/>
    <property type="match status" value="1"/>
</dbReference>
<dbReference type="SUPFAM" id="SSF56601">
    <property type="entry name" value="beta-lactamase/transpeptidase-like"/>
    <property type="match status" value="1"/>
</dbReference>
<gene>
    <name evidence="1" type="primary">glsA</name>
    <name type="ordered locus">Shewmr4_1183</name>
</gene>
<keyword id="KW-0378">Hydrolase</keyword>
<organism>
    <name type="scientific">Shewanella sp. (strain MR-4)</name>
    <dbReference type="NCBI Taxonomy" id="60480"/>
    <lineage>
        <taxon>Bacteria</taxon>
        <taxon>Pseudomonadati</taxon>
        <taxon>Pseudomonadota</taxon>
        <taxon>Gammaproteobacteria</taxon>
        <taxon>Alteromonadales</taxon>
        <taxon>Shewanellaceae</taxon>
        <taxon>Shewanella</taxon>
    </lineage>
</organism>